<evidence type="ECO:0000255" key="1">
    <source>
        <dbReference type="HAMAP-Rule" id="MF_01077"/>
    </source>
</evidence>
<feature type="chain" id="PRO_0000384753" description="Ribosome maturation factor RimP">
    <location>
        <begin position="1"/>
        <end position="152"/>
    </location>
</feature>
<keyword id="KW-0963">Cytoplasm</keyword>
<keyword id="KW-1185">Reference proteome</keyword>
<keyword id="KW-0690">Ribosome biogenesis</keyword>
<protein>
    <recommendedName>
        <fullName evidence="1">Ribosome maturation factor RimP</fullName>
    </recommendedName>
</protein>
<reference key="1">
    <citation type="submission" date="2006-06" db="EMBL/GenBank/DDBJ databases">
        <title>Complete sequence of Rubrobacter xylanophilus DSM 9941.</title>
        <authorList>
            <consortium name="US DOE Joint Genome Institute"/>
            <person name="Copeland A."/>
            <person name="Lucas S."/>
            <person name="Lapidus A."/>
            <person name="Barry K."/>
            <person name="Detter J.C."/>
            <person name="Glavina del Rio T."/>
            <person name="Hammon N."/>
            <person name="Israni S."/>
            <person name="Dalin E."/>
            <person name="Tice H."/>
            <person name="Pitluck S."/>
            <person name="Munk A.C."/>
            <person name="Brettin T."/>
            <person name="Bruce D."/>
            <person name="Han C."/>
            <person name="Tapia R."/>
            <person name="Gilna P."/>
            <person name="Schmutz J."/>
            <person name="Larimer F."/>
            <person name="Land M."/>
            <person name="Hauser L."/>
            <person name="Kyrpides N."/>
            <person name="Lykidis A."/>
            <person name="da Costa M.S."/>
            <person name="Rainey F.A."/>
            <person name="Empadinhas N."/>
            <person name="Jolivet E."/>
            <person name="Battista J.R."/>
            <person name="Richardson P."/>
        </authorList>
    </citation>
    <scope>NUCLEOTIDE SEQUENCE [LARGE SCALE GENOMIC DNA]</scope>
    <source>
        <strain>DSM 9941 / JCM 11954 / NBRC 16129 / PRD-1</strain>
    </source>
</reference>
<name>RIMP_RUBXD</name>
<organism>
    <name type="scientific">Rubrobacter xylanophilus (strain DSM 9941 / JCM 11954 / NBRC 16129 / PRD-1)</name>
    <dbReference type="NCBI Taxonomy" id="266117"/>
    <lineage>
        <taxon>Bacteria</taxon>
        <taxon>Bacillati</taxon>
        <taxon>Actinomycetota</taxon>
        <taxon>Rubrobacteria</taxon>
        <taxon>Rubrobacterales</taxon>
        <taxon>Rubrobacteraceae</taxon>
        <taxon>Rubrobacter</taxon>
    </lineage>
</organism>
<accession>Q1AW57</accession>
<proteinExistence type="inferred from homology"/>
<comment type="function">
    <text evidence="1">Required for maturation of 30S ribosomal subunits.</text>
</comment>
<comment type="subcellular location">
    <subcellularLocation>
        <location evidence="1">Cytoplasm</location>
    </subcellularLocation>
</comment>
<comment type="similarity">
    <text evidence="1">Belongs to the RimP family.</text>
</comment>
<gene>
    <name evidence="1" type="primary">rimP</name>
    <name type="ordered locus">Rxyl_1409</name>
</gene>
<sequence length="152" mass="16906">MVVTATRLDRLSEAVERALPEGTELVEARFSRGPLLTLLVDREGGPVDHEFCARIISIVAPALEEEGYSGMIEVSSPGIERPLTRPSHFRRFIGRRVRVRVGEPVDGRRNFTGVIERVADAGFVLRLSEDGEEVELPFGSVTRAHLKEDLDK</sequence>
<dbReference type="EMBL" id="CP000386">
    <property type="protein sequence ID" value="ABG04371.1"/>
    <property type="molecule type" value="Genomic_DNA"/>
</dbReference>
<dbReference type="RefSeq" id="WP_011564388.1">
    <property type="nucleotide sequence ID" value="NC_008148.1"/>
</dbReference>
<dbReference type="SMR" id="Q1AW57"/>
<dbReference type="STRING" id="266117.Rxyl_1409"/>
<dbReference type="KEGG" id="rxy:Rxyl_1409"/>
<dbReference type="eggNOG" id="COG0779">
    <property type="taxonomic scope" value="Bacteria"/>
</dbReference>
<dbReference type="HOGENOM" id="CLU_070525_2_2_11"/>
<dbReference type="PhylomeDB" id="Q1AW57"/>
<dbReference type="Proteomes" id="UP000006637">
    <property type="component" value="Chromosome"/>
</dbReference>
<dbReference type="GO" id="GO:0005829">
    <property type="term" value="C:cytosol"/>
    <property type="evidence" value="ECO:0007669"/>
    <property type="project" value="TreeGrafter"/>
</dbReference>
<dbReference type="GO" id="GO:0000028">
    <property type="term" value="P:ribosomal small subunit assembly"/>
    <property type="evidence" value="ECO:0007669"/>
    <property type="project" value="TreeGrafter"/>
</dbReference>
<dbReference type="GO" id="GO:0006412">
    <property type="term" value="P:translation"/>
    <property type="evidence" value="ECO:0007669"/>
    <property type="project" value="TreeGrafter"/>
</dbReference>
<dbReference type="CDD" id="cd01734">
    <property type="entry name" value="YlxS_C"/>
    <property type="match status" value="1"/>
</dbReference>
<dbReference type="Gene3D" id="2.30.30.180">
    <property type="entry name" value="Ribosome maturation factor RimP, C-terminal domain"/>
    <property type="match status" value="1"/>
</dbReference>
<dbReference type="Gene3D" id="3.30.300.70">
    <property type="entry name" value="RimP-like superfamily, N-terminal"/>
    <property type="match status" value="1"/>
</dbReference>
<dbReference type="HAMAP" id="MF_01077">
    <property type="entry name" value="RimP"/>
    <property type="match status" value="1"/>
</dbReference>
<dbReference type="InterPro" id="IPR003728">
    <property type="entry name" value="Ribosome_maturation_RimP"/>
</dbReference>
<dbReference type="InterPro" id="IPR028998">
    <property type="entry name" value="RimP_C"/>
</dbReference>
<dbReference type="InterPro" id="IPR036847">
    <property type="entry name" value="RimP_C_sf"/>
</dbReference>
<dbReference type="InterPro" id="IPR028989">
    <property type="entry name" value="RimP_N"/>
</dbReference>
<dbReference type="InterPro" id="IPR035956">
    <property type="entry name" value="RimP_N_sf"/>
</dbReference>
<dbReference type="PANTHER" id="PTHR33867">
    <property type="entry name" value="RIBOSOME MATURATION FACTOR RIMP"/>
    <property type="match status" value="1"/>
</dbReference>
<dbReference type="PANTHER" id="PTHR33867:SF1">
    <property type="entry name" value="RIBOSOME MATURATION FACTOR RIMP"/>
    <property type="match status" value="1"/>
</dbReference>
<dbReference type="Pfam" id="PF17384">
    <property type="entry name" value="DUF150_C"/>
    <property type="match status" value="1"/>
</dbReference>
<dbReference type="Pfam" id="PF02576">
    <property type="entry name" value="RimP_N"/>
    <property type="match status" value="1"/>
</dbReference>
<dbReference type="SUPFAM" id="SSF74942">
    <property type="entry name" value="YhbC-like, C-terminal domain"/>
    <property type="match status" value="1"/>
</dbReference>
<dbReference type="SUPFAM" id="SSF75420">
    <property type="entry name" value="YhbC-like, N-terminal domain"/>
    <property type="match status" value="1"/>
</dbReference>